<name>RTAI1_ARTBC</name>
<organism>
    <name type="scientific">Arthroderma benhamiae (strain ATCC MYA-4681 / CBS 112371)</name>
    <name type="common">Trichophyton mentagrophytes</name>
    <dbReference type="NCBI Taxonomy" id="663331"/>
    <lineage>
        <taxon>Eukaryota</taxon>
        <taxon>Fungi</taxon>
        <taxon>Dikarya</taxon>
        <taxon>Ascomycota</taxon>
        <taxon>Pezizomycotina</taxon>
        <taxon>Eurotiomycetes</taxon>
        <taxon>Eurotiomycetidae</taxon>
        <taxon>Onygenales</taxon>
        <taxon>Arthrodermataceae</taxon>
        <taxon>Trichophyton</taxon>
    </lineage>
</organism>
<accession>P0DN30</accession>
<accession>D4B1J8</accession>
<evidence type="ECO:0000250" key="1">
    <source>
        <dbReference type="UniProtKB" id="Q8WWV3"/>
    </source>
</evidence>
<evidence type="ECO:0000256" key="2">
    <source>
        <dbReference type="SAM" id="MobiDB-lite"/>
    </source>
</evidence>
<evidence type="ECO:0000305" key="3"/>
<feature type="transit peptide" description="Mitochondrion" evidence="3">
    <location>
        <begin position="1"/>
        <end status="unknown"/>
    </location>
</feature>
<feature type="chain" id="PRO_0000434427" description="Probable zinc-binding oxidoreductase, mitochondrial">
    <location>
        <begin status="unknown"/>
        <end position="331"/>
    </location>
</feature>
<feature type="region of interest" description="Disordered" evidence="2">
    <location>
        <begin position="1"/>
        <end position="34"/>
    </location>
</feature>
<feature type="compositionally biased region" description="Polar residues" evidence="2">
    <location>
        <begin position="1"/>
        <end position="29"/>
    </location>
</feature>
<sequence length="331" mass="35838">MASVTSVPKTGRSVNQDVPATTLTLQTRPTPAPNFDEGEHLIRVHATALCAGELYWHTYVTFTKEETVPGPDVAGTVVLAPPSSPFKPGDDVYCRIPYSRAGGARDHTIALTSELARKPKNLTWEEAATVPLSALTAWQALFDQSGLWEGPEDERVKGKRVAVTAASGAVGMWILQFARIAGFDAVIGTCGDGNEDFVKSMGATDAVNYKTTSLTAWAAEKQGRKADLVIDCFGGKSLADAWGCVKDGGVLISMVGYPEQEKPAGLEVKDVKSHFFIMEPRGDQLQKVTELVEQGKCSFLMDSVYPLEQFQEATDKVESRRVRGKVVLKVL</sequence>
<reference key="1">
    <citation type="journal article" date="2011" name="Genome Biol.">
        <title>Comparative and functional genomics provide insights into the pathogenicity of dermatophytic fungi.</title>
        <authorList>
            <person name="Burmester A."/>
            <person name="Shelest E."/>
            <person name="Gloeckner G."/>
            <person name="Heddergott C."/>
            <person name="Schindler S."/>
            <person name="Staib P."/>
            <person name="Heidel A."/>
            <person name="Felder M."/>
            <person name="Petzold A."/>
            <person name="Szafranski K."/>
            <person name="Feuermann M."/>
            <person name="Pedruzzi I."/>
            <person name="Priebe S."/>
            <person name="Groth M."/>
            <person name="Winkler R."/>
            <person name="Li W."/>
            <person name="Kniemeyer O."/>
            <person name="Schroeckh V."/>
            <person name="Hertweck C."/>
            <person name="Hube B."/>
            <person name="White T.C."/>
            <person name="Platzer M."/>
            <person name="Guthke R."/>
            <person name="Heitman J."/>
            <person name="Woestemeyer J."/>
            <person name="Zipfel P.F."/>
            <person name="Monod M."/>
            <person name="Brakhage A.A."/>
        </authorList>
    </citation>
    <scope>NUCLEOTIDE SEQUENCE [LARGE SCALE GENOMIC DNA]</scope>
    <source>
        <strain>ATCC MYA-4681 / CBS 112371</strain>
    </source>
</reference>
<proteinExistence type="inferred from homology"/>
<keyword id="KW-0496">Mitochondrion</keyword>
<keyword id="KW-0560">Oxidoreductase</keyword>
<keyword id="KW-1185">Reference proteome</keyword>
<keyword id="KW-0809">Transit peptide</keyword>
<comment type="subcellular location">
    <subcellularLocation>
        <location evidence="1">Mitochondrion</location>
    </subcellularLocation>
</comment>
<comment type="similarity">
    <text evidence="3">Belongs to the zinc-containing alcohol dehydrogenase family. Quinone oxidoreductase subfamily.</text>
</comment>
<comment type="sequence caution" evidence="3">
    <conflict type="erroneous gene model prediction">
        <sequence resource="EMBL-CDS" id="EFE30837"/>
    </conflict>
    <text>The predicted gene has been split into 2 genes: ARB_02327-1 and ARB_02327-2.</text>
</comment>
<protein>
    <recommendedName>
        <fullName evidence="3">Probable zinc-binding oxidoreductase, mitochondrial</fullName>
        <ecNumber evidence="3">1.-.-.-</ecNumber>
    </recommendedName>
</protein>
<dbReference type="EC" id="1.-.-.-" evidence="3"/>
<dbReference type="EMBL" id="ABSU01000026">
    <property type="protein sequence ID" value="EFE30837.1"/>
    <property type="status" value="ALT_SEQ"/>
    <property type="molecule type" value="Genomic_DNA"/>
</dbReference>
<dbReference type="RefSeq" id="XP_003011477.1">
    <property type="nucleotide sequence ID" value="XM_003011431.1"/>
</dbReference>
<dbReference type="SMR" id="P0DN30"/>
<dbReference type="STRING" id="663331.P0DN30"/>
<dbReference type="KEGG" id="abe:ARB_02327"/>
<dbReference type="OrthoDB" id="191139at2759"/>
<dbReference type="Proteomes" id="UP000008866">
    <property type="component" value="Unassembled WGS sequence"/>
</dbReference>
<dbReference type="GO" id="GO:0005739">
    <property type="term" value="C:mitochondrion"/>
    <property type="evidence" value="ECO:0007669"/>
    <property type="project" value="UniProtKB-SubCell"/>
</dbReference>
<dbReference type="GO" id="GO:0016491">
    <property type="term" value="F:oxidoreductase activity"/>
    <property type="evidence" value="ECO:0007669"/>
    <property type="project" value="UniProtKB-KW"/>
</dbReference>
<dbReference type="CDD" id="cd05289">
    <property type="entry name" value="MDR_like_2"/>
    <property type="match status" value="1"/>
</dbReference>
<dbReference type="Gene3D" id="3.90.180.10">
    <property type="entry name" value="Medium-chain alcohol dehydrogenases, catalytic domain"/>
    <property type="match status" value="1"/>
</dbReference>
<dbReference type="Gene3D" id="3.40.50.720">
    <property type="entry name" value="NAD(P)-binding Rossmann-like Domain"/>
    <property type="match status" value="1"/>
</dbReference>
<dbReference type="InterPro" id="IPR013154">
    <property type="entry name" value="ADH-like_N"/>
</dbReference>
<dbReference type="InterPro" id="IPR011032">
    <property type="entry name" value="GroES-like_sf"/>
</dbReference>
<dbReference type="InterPro" id="IPR036291">
    <property type="entry name" value="NAD(P)-bd_dom_sf"/>
</dbReference>
<dbReference type="InterPro" id="IPR020843">
    <property type="entry name" value="PKS_ER"/>
</dbReference>
<dbReference type="InterPro" id="IPR050700">
    <property type="entry name" value="YIM1/Zinc_Alcohol_DH_Fams"/>
</dbReference>
<dbReference type="PANTHER" id="PTHR11695">
    <property type="entry name" value="ALCOHOL DEHYDROGENASE RELATED"/>
    <property type="match status" value="1"/>
</dbReference>
<dbReference type="PANTHER" id="PTHR11695:SF647">
    <property type="entry name" value="ENOYL REDUCTASE (ER) DOMAIN-CONTAINING PROTEIN"/>
    <property type="match status" value="1"/>
</dbReference>
<dbReference type="Pfam" id="PF08240">
    <property type="entry name" value="ADH_N"/>
    <property type="match status" value="1"/>
</dbReference>
<dbReference type="Pfam" id="PF13602">
    <property type="entry name" value="ADH_zinc_N_2"/>
    <property type="match status" value="1"/>
</dbReference>
<dbReference type="SMART" id="SM00829">
    <property type="entry name" value="PKS_ER"/>
    <property type="match status" value="1"/>
</dbReference>
<dbReference type="SUPFAM" id="SSF50129">
    <property type="entry name" value="GroES-like"/>
    <property type="match status" value="1"/>
</dbReference>
<dbReference type="SUPFAM" id="SSF51735">
    <property type="entry name" value="NAD(P)-binding Rossmann-fold domains"/>
    <property type="match status" value="1"/>
</dbReference>
<dbReference type="PROSITE" id="PS51166">
    <property type="entry name" value="CBM20"/>
    <property type="match status" value="1"/>
</dbReference>
<gene>
    <name type="ORF">ARB_02327-2</name>
</gene>